<reference key="1">
    <citation type="journal article" date="2002" name="Proc. Natl. Acad. Sci. U.S.A.">
        <title>Extensive mosaic structure revealed by the complete genome sequence of uropathogenic Escherichia coli.</title>
        <authorList>
            <person name="Welch R.A."/>
            <person name="Burland V."/>
            <person name="Plunkett G. III"/>
            <person name="Redford P."/>
            <person name="Roesch P."/>
            <person name="Rasko D."/>
            <person name="Buckles E.L."/>
            <person name="Liou S.-R."/>
            <person name="Boutin A."/>
            <person name="Hackett J."/>
            <person name="Stroud D."/>
            <person name="Mayhew G.F."/>
            <person name="Rose D.J."/>
            <person name="Zhou S."/>
            <person name="Schwartz D.C."/>
            <person name="Perna N.T."/>
            <person name="Mobley H.L.T."/>
            <person name="Donnenberg M.S."/>
            <person name="Blattner F.R."/>
        </authorList>
    </citation>
    <scope>NUCLEOTIDE SEQUENCE [LARGE SCALE GENOMIC DNA]</scope>
    <source>
        <strain>CFT073 / ATCC 700928 / UPEC</strain>
    </source>
</reference>
<proteinExistence type="inferred from homology"/>
<keyword id="KW-0289">Folate biosynthesis</keyword>
<keyword id="KW-0460">Magnesium</keyword>
<keyword id="KW-0479">Metal-binding</keyword>
<keyword id="KW-1185">Reference proteome</keyword>
<keyword id="KW-0808">Transferase</keyword>
<accession>P0AC14</accession>
<accession>P26282</accession>
<accession>P78110</accession>
<protein>
    <recommendedName>
        <fullName>Dihydropteroate synthase</fullName>
        <shortName>DHPS</shortName>
        <ecNumber>2.5.1.15</ecNumber>
    </recommendedName>
    <alternativeName>
        <fullName>Dihydropteroate pyrophosphorylase</fullName>
    </alternativeName>
</protein>
<feature type="chain" id="PRO_0000168208" description="Dihydropteroate synthase">
    <location>
        <begin position="1"/>
        <end position="282"/>
    </location>
</feature>
<feature type="domain" description="Pterin-binding" evidence="4">
    <location>
        <begin position="15"/>
        <end position="267"/>
    </location>
</feature>
<feature type="binding site" evidence="3">
    <location>
        <position position="22"/>
    </location>
    <ligand>
        <name>Mg(2+)</name>
        <dbReference type="ChEBI" id="CHEBI:18420"/>
    </ligand>
</feature>
<feature type="binding site" evidence="2">
    <location>
        <position position="62"/>
    </location>
    <ligand>
        <name>(7,8-dihydropterin-6-yl)methyl diphosphate</name>
        <dbReference type="ChEBI" id="CHEBI:72950"/>
    </ligand>
</feature>
<feature type="binding site" evidence="2">
    <location>
        <position position="96"/>
    </location>
    <ligand>
        <name>(7,8-dihydropterin-6-yl)methyl diphosphate</name>
        <dbReference type="ChEBI" id="CHEBI:72950"/>
    </ligand>
</feature>
<feature type="binding site" evidence="2">
    <location>
        <position position="115"/>
    </location>
    <ligand>
        <name>(7,8-dihydropterin-6-yl)methyl diphosphate</name>
        <dbReference type="ChEBI" id="CHEBI:72950"/>
    </ligand>
</feature>
<feature type="binding site" evidence="2">
    <location>
        <position position="185"/>
    </location>
    <ligand>
        <name>(7,8-dihydropterin-6-yl)methyl diphosphate</name>
        <dbReference type="ChEBI" id="CHEBI:72950"/>
    </ligand>
</feature>
<feature type="binding site" evidence="2">
    <location>
        <position position="221"/>
    </location>
    <ligand>
        <name>(7,8-dihydropterin-6-yl)methyl diphosphate</name>
        <dbReference type="ChEBI" id="CHEBI:72950"/>
    </ligand>
</feature>
<feature type="binding site" evidence="2">
    <location>
        <begin position="255"/>
        <end position="257"/>
    </location>
    <ligand>
        <name>(7,8-dihydropterin-6-yl)methyl diphosphate</name>
        <dbReference type="ChEBI" id="CHEBI:72950"/>
    </ligand>
</feature>
<name>DHPS_ECOL6</name>
<dbReference type="EC" id="2.5.1.15"/>
<dbReference type="EMBL" id="AE014075">
    <property type="protein sequence ID" value="AAN82374.1"/>
    <property type="status" value="ALT_INIT"/>
    <property type="molecule type" value="Genomic_DNA"/>
</dbReference>
<dbReference type="RefSeq" id="WP_000764731.1">
    <property type="nucleotide sequence ID" value="NZ_CP051263.1"/>
</dbReference>
<dbReference type="SMR" id="P0AC14"/>
<dbReference type="STRING" id="199310.c3933"/>
<dbReference type="GeneID" id="93778804"/>
<dbReference type="KEGG" id="ecc:c3933"/>
<dbReference type="eggNOG" id="COG0294">
    <property type="taxonomic scope" value="Bacteria"/>
</dbReference>
<dbReference type="HOGENOM" id="CLU_008023_0_3_6"/>
<dbReference type="UniPathway" id="UPA00077">
    <property type="reaction ID" value="UER00156"/>
</dbReference>
<dbReference type="Proteomes" id="UP000001410">
    <property type="component" value="Chromosome"/>
</dbReference>
<dbReference type="GO" id="GO:0005829">
    <property type="term" value="C:cytosol"/>
    <property type="evidence" value="ECO:0007669"/>
    <property type="project" value="TreeGrafter"/>
</dbReference>
<dbReference type="GO" id="GO:0004156">
    <property type="term" value="F:dihydropteroate synthase activity"/>
    <property type="evidence" value="ECO:0007669"/>
    <property type="project" value="UniProtKB-EC"/>
</dbReference>
<dbReference type="GO" id="GO:0046872">
    <property type="term" value="F:metal ion binding"/>
    <property type="evidence" value="ECO:0007669"/>
    <property type="project" value="UniProtKB-KW"/>
</dbReference>
<dbReference type="GO" id="GO:0046656">
    <property type="term" value="P:folic acid biosynthetic process"/>
    <property type="evidence" value="ECO:0007669"/>
    <property type="project" value="UniProtKB-KW"/>
</dbReference>
<dbReference type="GO" id="GO:0046654">
    <property type="term" value="P:tetrahydrofolate biosynthetic process"/>
    <property type="evidence" value="ECO:0007669"/>
    <property type="project" value="UniProtKB-UniPathway"/>
</dbReference>
<dbReference type="CDD" id="cd00739">
    <property type="entry name" value="DHPS"/>
    <property type="match status" value="1"/>
</dbReference>
<dbReference type="FunFam" id="3.20.20.20:FF:000004">
    <property type="entry name" value="Dihydropteroate synthase"/>
    <property type="match status" value="1"/>
</dbReference>
<dbReference type="Gene3D" id="3.20.20.20">
    <property type="entry name" value="Dihydropteroate synthase-like"/>
    <property type="match status" value="1"/>
</dbReference>
<dbReference type="InterPro" id="IPR045031">
    <property type="entry name" value="DHP_synth-like"/>
</dbReference>
<dbReference type="InterPro" id="IPR006390">
    <property type="entry name" value="DHP_synth_dom"/>
</dbReference>
<dbReference type="InterPro" id="IPR011005">
    <property type="entry name" value="Dihydropteroate_synth-like_sf"/>
</dbReference>
<dbReference type="InterPro" id="IPR000489">
    <property type="entry name" value="Pterin-binding_dom"/>
</dbReference>
<dbReference type="NCBIfam" id="TIGR01496">
    <property type="entry name" value="DHPS"/>
    <property type="match status" value="1"/>
</dbReference>
<dbReference type="NCBIfam" id="NF008625">
    <property type="entry name" value="PRK11613.1"/>
    <property type="match status" value="1"/>
</dbReference>
<dbReference type="PANTHER" id="PTHR20941">
    <property type="entry name" value="FOLATE SYNTHESIS PROTEINS"/>
    <property type="match status" value="1"/>
</dbReference>
<dbReference type="PANTHER" id="PTHR20941:SF1">
    <property type="entry name" value="FOLIC ACID SYNTHESIS PROTEIN FOL1"/>
    <property type="match status" value="1"/>
</dbReference>
<dbReference type="Pfam" id="PF00809">
    <property type="entry name" value="Pterin_bind"/>
    <property type="match status" value="1"/>
</dbReference>
<dbReference type="SUPFAM" id="SSF51717">
    <property type="entry name" value="Dihydropteroate synthetase-like"/>
    <property type="match status" value="1"/>
</dbReference>
<dbReference type="PROSITE" id="PS00792">
    <property type="entry name" value="DHPS_1"/>
    <property type="match status" value="1"/>
</dbReference>
<dbReference type="PROSITE" id="PS00793">
    <property type="entry name" value="DHPS_2"/>
    <property type="match status" value="1"/>
</dbReference>
<dbReference type="PROSITE" id="PS50972">
    <property type="entry name" value="PTERIN_BINDING"/>
    <property type="match status" value="1"/>
</dbReference>
<gene>
    <name type="primary">folP</name>
    <name type="ordered locus">c3933</name>
</gene>
<organism>
    <name type="scientific">Escherichia coli O6:H1 (strain CFT073 / ATCC 700928 / UPEC)</name>
    <dbReference type="NCBI Taxonomy" id="199310"/>
    <lineage>
        <taxon>Bacteria</taxon>
        <taxon>Pseudomonadati</taxon>
        <taxon>Pseudomonadota</taxon>
        <taxon>Gammaproteobacteria</taxon>
        <taxon>Enterobacterales</taxon>
        <taxon>Enterobacteriaceae</taxon>
        <taxon>Escherichia</taxon>
    </lineage>
</organism>
<evidence type="ECO:0000250" key="1"/>
<evidence type="ECO:0000250" key="2">
    <source>
        <dbReference type="UniProtKB" id="P0AC13"/>
    </source>
</evidence>
<evidence type="ECO:0000250" key="3">
    <source>
        <dbReference type="UniProtKB" id="P9WND1"/>
    </source>
</evidence>
<evidence type="ECO:0000255" key="4">
    <source>
        <dbReference type="PROSITE-ProRule" id="PRU00334"/>
    </source>
</evidence>
<evidence type="ECO:0000305" key="5"/>
<sequence length="282" mass="30615">MKLFAQGTSLDLSHPHVMGILNVTPDSFSDGGTHNSLIDAVKHANLMINAGATIIDVGGESTRPGAAEVSVEEELQRVIPVVEAIAQRFEVWISVDTSKPEVIRESAKVGAHIINDIRSLSEPGALEAAAETGLPVCLMHMQGNPKTMQEAPKYDDVFAEVNRYFIEQIARCEQAGIAKEKLLLDPGFGFGKNLSHNYSLLARLAEFHHFNLPLLVGMSRKSMIGQLLNVGPSERLSGSLACAVIAAMQGAHIIRVHDVKETVEAMRVVEATLSAKENKRYE</sequence>
<comment type="function">
    <text evidence="2">Catalyzes the condensation of para-aminobenzoate (pABA) with 6-hydroxymethyl-7,8-dihydropterin diphosphate (DHPt-PP) to form 7,8-dihydropteroate (H2Pte), the immediate precursor of folate derivatives.</text>
</comment>
<comment type="catalytic activity">
    <reaction evidence="2">
        <text>(7,8-dihydropterin-6-yl)methyl diphosphate + 4-aminobenzoate = 7,8-dihydropteroate + diphosphate</text>
        <dbReference type="Rhea" id="RHEA:19949"/>
        <dbReference type="ChEBI" id="CHEBI:17836"/>
        <dbReference type="ChEBI" id="CHEBI:17839"/>
        <dbReference type="ChEBI" id="CHEBI:33019"/>
        <dbReference type="ChEBI" id="CHEBI:72950"/>
        <dbReference type="EC" id="2.5.1.15"/>
    </reaction>
</comment>
<comment type="cofactor">
    <cofactor evidence="2">
        <name>Mg(2+)</name>
        <dbReference type="ChEBI" id="CHEBI:18420"/>
    </cofactor>
</comment>
<comment type="pathway">
    <text>Cofactor biosynthesis; tetrahydrofolate biosynthesis; 7,8-dihydrofolate from 2-amino-4-hydroxy-6-hydroxymethyl-7,8-dihydropteridine diphosphate and 4-aminobenzoate: step 1/2.</text>
</comment>
<comment type="subunit">
    <text evidence="1">Homodimer.</text>
</comment>
<comment type="similarity">
    <text evidence="5">Belongs to the DHPS family.</text>
</comment>
<comment type="sequence caution" evidence="5">
    <conflict type="erroneous initiation">
        <sequence resource="EMBL-CDS" id="AAN82374"/>
    </conflict>
    <text>Extended N-terminus.</text>
</comment>